<name>DAPA_LACAC</name>
<organism>
    <name type="scientific">Lactobacillus acidophilus (strain ATCC 700396 / NCK56 / N2 / NCFM)</name>
    <dbReference type="NCBI Taxonomy" id="272621"/>
    <lineage>
        <taxon>Bacteria</taxon>
        <taxon>Bacillati</taxon>
        <taxon>Bacillota</taxon>
        <taxon>Bacilli</taxon>
        <taxon>Lactobacillales</taxon>
        <taxon>Lactobacillaceae</taxon>
        <taxon>Lactobacillus</taxon>
    </lineage>
</organism>
<feature type="chain" id="PRO_0000340960" description="4-hydroxy-tetrahydrodipicolinate synthase">
    <location>
        <begin position="1"/>
        <end position="311"/>
    </location>
</feature>
<feature type="active site" description="Proton donor/acceptor" evidence="1">
    <location>
        <position position="138"/>
    </location>
</feature>
<feature type="active site" description="Schiff-base intermediate with substrate" evidence="1">
    <location>
        <position position="166"/>
    </location>
</feature>
<feature type="binding site" evidence="1">
    <location>
        <position position="49"/>
    </location>
    <ligand>
        <name>pyruvate</name>
        <dbReference type="ChEBI" id="CHEBI:15361"/>
    </ligand>
</feature>
<feature type="binding site" evidence="1">
    <location>
        <position position="207"/>
    </location>
    <ligand>
        <name>pyruvate</name>
        <dbReference type="ChEBI" id="CHEBI:15361"/>
    </ligand>
</feature>
<feature type="site" description="Part of a proton relay during catalysis" evidence="1">
    <location>
        <position position="48"/>
    </location>
</feature>
<feature type="site" description="Part of a proton relay during catalysis" evidence="1">
    <location>
        <position position="112"/>
    </location>
</feature>
<sequence>MATLIDADLLTAIVTPFDENNKIDFSSLEKLVNYLIGQGCNGFVVGGTTGETPTLTHDEKIDLYKHFSQFVNKRVPIIAGTGSNNTAETIAFTNEVAQIEGIDYALIVVPPYNKPNQRSMVAHFSAINDATKIPFLIYNIPGRTGVKMEKETIVQLSRLDNIKGIKQCASLEEMEYIIENKDPDFQVFTGEDTQALTARLLGANGVISVASHIYANQMRRMYDSLYEGNYPLAAKIQRWLTPRMQALFMYPSPAPVKAVLNAQGLNVGGCRLPLVELNDEEKITLAQRLGLDDNALMQKLPLDLGKELEDD</sequence>
<protein>
    <recommendedName>
        <fullName evidence="1">4-hydroxy-tetrahydrodipicolinate synthase</fullName>
        <shortName evidence="1">HTPA synthase</shortName>
        <ecNumber evidence="1">4.3.3.7</ecNumber>
    </recommendedName>
</protein>
<dbReference type="EC" id="4.3.3.7" evidence="1"/>
<dbReference type="EMBL" id="CP000033">
    <property type="protein sequence ID" value="AAV42715.1"/>
    <property type="molecule type" value="Genomic_DNA"/>
</dbReference>
<dbReference type="RefSeq" id="WP_003546883.1">
    <property type="nucleotide sequence ID" value="NC_006814.3"/>
</dbReference>
<dbReference type="RefSeq" id="YP_193746.1">
    <property type="nucleotide sequence ID" value="NC_006814.3"/>
</dbReference>
<dbReference type="SMR" id="Q5FKQ9"/>
<dbReference type="STRING" id="272621.LBA0854"/>
<dbReference type="GeneID" id="93290023"/>
<dbReference type="KEGG" id="lac:LBA0854"/>
<dbReference type="PATRIC" id="fig|272621.13.peg.816"/>
<dbReference type="eggNOG" id="COG0329">
    <property type="taxonomic scope" value="Bacteria"/>
</dbReference>
<dbReference type="HOGENOM" id="CLU_049343_7_1_9"/>
<dbReference type="OrthoDB" id="9782828at2"/>
<dbReference type="BioCyc" id="LACI272621:G1G49-865-MONOMER"/>
<dbReference type="UniPathway" id="UPA00034">
    <property type="reaction ID" value="UER00017"/>
</dbReference>
<dbReference type="Proteomes" id="UP000006381">
    <property type="component" value="Chromosome"/>
</dbReference>
<dbReference type="GO" id="GO:0005829">
    <property type="term" value="C:cytosol"/>
    <property type="evidence" value="ECO:0007669"/>
    <property type="project" value="TreeGrafter"/>
</dbReference>
<dbReference type="GO" id="GO:0008840">
    <property type="term" value="F:4-hydroxy-tetrahydrodipicolinate synthase activity"/>
    <property type="evidence" value="ECO:0007669"/>
    <property type="project" value="UniProtKB-UniRule"/>
</dbReference>
<dbReference type="GO" id="GO:0019877">
    <property type="term" value="P:diaminopimelate biosynthetic process"/>
    <property type="evidence" value="ECO:0007669"/>
    <property type="project" value="UniProtKB-UniRule"/>
</dbReference>
<dbReference type="GO" id="GO:0009089">
    <property type="term" value="P:lysine biosynthetic process via diaminopimelate"/>
    <property type="evidence" value="ECO:0007669"/>
    <property type="project" value="UniProtKB-UniRule"/>
</dbReference>
<dbReference type="CDD" id="cd00950">
    <property type="entry name" value="DHDPS"/>
    <property type="match status" value="1"/>
</dbReference>
<dbReference type="Gene3D" id="3.20.20.70">
    <property type="entry name" value="Aldolase class I"/>
    <property type="match status" value="1"/>
</dbReference>
<dbReference type="HAMAP" id="MF_00418">
    <property type="entry name" value="DapA"/>
    <property type="match status" value="1"/>
</dbReference>
<dbReference type="InterPro" id="IPR013785">
    <property type="entry name" value="Aldolase_TIM"/>
</dbReference>
<dbReference type="InterPro" id="IPR005263">
    <property type="entry name" value="DapA"/>
</dbReference>
<dbReference type="InterPro" id="IPR002220">
    <property type="entry name" value="DapA-like"/>
</dbReference>
<dbReference type="InterPro" id="IPR020625">
    <property type="entry name" value="Schiff_base-form_aldolases_AS"/>
</dbReference>
<dbReference type="NCBIfam" id="TIGR00674">
    <property type="entry name" value="dapA"/>
    <property type="match status" value="1"/>
</dbReference>
<dbReference type="PANTHER" id="PTHR12128:SF66">
    <property type="entry name" value="4-HYDROXY-2-OXOGLUTARATE ALDOLASE, MITOCHONDRIAL"/>
    <property type="match status" value="1"/>
</dbReference>
<dbReference type="PANTHER" id="PTHR12128">
    <property type="entry name" value="DIHYDRODIPICOLINATE SYNTHASE"/>
    <property type="match status" value="1"/>
</dbReference>
<dbReference type="Pfam" id="PF00701">
    <property type="entry name" value="DHDPS"/>
    <property type="match status" value="1"/>
</dbReference>
<dbReference type="PIRSF" id="PIRSF001365">
    <property type="entry name" value="DHDPS"/>
    <property type="match status" value="1"/>
</dbReference>
<dbReference type="PRINTS" id="PR00146">
    <property type="entry name" value="DHPICSNTHASE"/>
</dbReference>
<dbReference type="SMART" id="SM01130">
    <property type="entry name" value="DHDPS"/>
    <property type="match status" value="1"/>
</dbReference>
<dbReference type="SUPFAM" id="SSF51569">
    <property type="entry name" value="Aldolase"/>
    <property type="match status" value="1"/>
</dbReference>
<dbReference type="PROSITE" id="PS00666">
    <property type="entry name" value="DHDPS_2"/>
    <property type="match status" value="1"/>
</dbReference>
<evidence type="ECO:0000255" key="1">
    <source>
        <dbReference type="HAMAP-Rule" id="MF_00418"/>
    </source>
</evidence>
<evidence type="ECO:0000305" key="2"/>
<comment type="function">
    <text evidence="1">Catalyzes the condensation of (S)-aspartate-beta-semialdehyde [(S)-ASA] and pyruvate to 4-hydroxy-tetrahydrodipicolinate (HTPA).</text>
</comment>
<comment type="catalytic activity">
    <reaction evidence="1">
        <text>L-aspartate 4-semialdehyde + pyruvate = (2S,4S)-4-hydroxy-2,3,4,5-tetrahydrodipicolinate + H2O + H(+)</text>
        <dbReference type="Rhea" id="RHEA:34171"/>
        <dbReference type="ChEBI" id="CHEBI:15361"/>
        <dbReference type="ChEBI" id="CHEBI:15377"/>
        <dbReference type="ChEBI" id="CHEBI:15378"/>
        <dbReference type="ChEBI" id="CHEBI:67139"/>
        <dbReference type="ChEBI" id="CHEBI:537519"/>
        <dbReference type="EC" id="4.3.3.7"/>
    </reaction>
</comment>
<comment type="pathway">
    <text evidence="1">Amino-acid biosynthesis; L-lysine biosynthesis via DAP pathway; (S)-tetrahydrodipicolinate from L-aspartate: step 3/4.</text>
</comment>
<comment type="subunit">
    <text evidence="1">Homotetramer; dimer of dimers.</text>
</comment>
<comment type="subcellular location">
    <subcellularLocation>
        <location evidence="1">Cytoplasm</location>
    </subcellularLocation>
</comment>
<comment type="similarity">
    <text evidence="1">Belongs to the DapA family.</text>
</comment>
<comment type="caution">
    <text evidence="2">Was originally thought to be a dihydrodipicolinate synthase (DHDPS), catalyzing the condensation of (S)-aspartate-beta-semialdehyde [(S)-ASA] and pyruvate to dihydrodipicolinate (DHDP). However, it was shown in E.coli that the product of the enzymatic reaction is not dihydrodipicolinate but in fact (4S)-4-hydroxy-2,3,4,5-tetrahydro-(2S)-dipicolinic acid (HTPA), and that the consecutive dehydration reaction leading to DHDP is not spontaneous but catalyzed by DapB.</text>
</comment>
<keyword id="KW-0028">Amino-acid biosynthesis</keyword>
<keyword id="KW-0963">Cytoplasm</keyword>
<keyword id="KW-0220">Diaminopimelate biosynthesis</keyword>
<keyword id="KW-0456">Lyase</keyword>
<keyword id="KW-0457">Lysine biosynthesis</keyword>
<keyword id="KW-1185">Reference proteome</keyword>
<keyword id="KW-0704">Schiff base</keyword>
<reference key="1">
    <citation type="journal article" date="2005" name="Proc. Natl. Acad. Sci. U.S.A.">
        <title>Complete genome sequence of the probiotic lactic acid bacterium Lactobacillus acidophilus NCFM.</title>
        <authorList>
            <person name="Altermann E."/>
            <person name="Russell W.M."/>
            <person name="Azcarate-Peril M.A."/>
            <person name="Barrangou R."/>
            <person name="Buck B.L."/>
            <person name="McAuliffe O."/>
            <person name="Souther N."/>
            <person name="Dobson A."/>
            <person name="Duong T."/>
            <person name="Callanan M."/>
            <person name="Lick S."/>
            <person name="Hamrick A."/>
            <person name="Cano R."/>
            <person name="Klaenhammer T.R."/>
        </authorList>
    </citation>
    <scope>NUCLEOTIDE SEQUENCE [LARGE SCALE GENOMIC DNA]</scope>
    <source>
        <strain>ATCC 700396 / NCK56 / N2 / NCFM</strain>
    </source>
</reference>
<proteinExistence type="inferred from homology"/>
<gene>
    <name evidence="1" type="primary">dapA</name>
    <name type="ordered locus">LBA0854</name>
</gene>
<accession>Q5FKQ9</accession>